<feature type="chain" id="PRO_0000147752" description="GTP cyclohydrolase MptA">
    <location>
        <begin position="1"/>
        <end position="267"/>
    </location>
</feature>
<feature type="site" description="May be catalytically important" evidence="1">
    <location>
        <position position="157"/>
    </location>
</feature>
<proteinExistence type="inferred from homology"/>
<accession>Q5JH75</accession>
<reference key="1">
    <citation type="journal article" date="2005" name="Genome Res.">
        <title>Complete genome sequence of the hyperthermophilic archaeon Thermococcus kodakaraensis KOD1 and comparison with Pyrococcus genomes.</title>
        <authorList>
            <person name="Fukui T."/>
            <person name="Atomi H."/>
            <person name="Kanai T."/>
            <person name="Matsumi R."/>
            <person name="Fujiwara S."/>
            <person name="Imanaka T."/>
        </authorList>
    </citation>
    <scope>NUCLEOTIDE SEQUENCE [LARGE SCALE GENOMIC DNA]</scope>
    <source>
        <strain>ATCC BAA-918 / JCM 12380 / KOD1</strain>
    </source>
</reference>
<name>MPTA_THEKO</name>
<evidence type="ECO:0000255" key="1">
    <source>
        <dbReference type="HAMAP-Rule" id="MF_01527"/>
    </source>
</evidence>
<organism>
    <name type="scientific">Thermococcus kodakarensis (strain ATCC BAA-918 / JCM 12380 / KOD1)</name>
    <name type="common">Pyrococcus kodakaraensis (strain KOD1)</name>
    <dbReference type="NCBI Taxonomy" id="69014"/>
    <lineage>
        <taxon>Archaea</taxon>
        <taxon>Methanobacteriati</taxon>
        <taxon>Methanobacteriota</taxon>
        <taxon>Thermococci</taxon>
        <taxon>Thermococcales</taxon>
        <taxon>Thermococcaceae</taxon>
        <taxon>Thermococcus</taxon>
    </lineage>
</organism>
<sequence length="267" mass="30421">MFVETQEEVPEIREPLRRVGITNLRTVAKINWKGREYTFLPLIEVTIDVPAEKKGIHMSRLVESITEAMSEAVEEEVAKVHSSLEELGKSVIERLEGKHPHKRAEVWIKTHLIIPRTTPASKKTSYEPYDVEVGVIKNEDGSFEKVLRVRVIGNTACPHAMANNNGKTHIQRAIGELEIRAPFEEEIPLEEMIDVVESSFSHPTYTLLKTVDENAVVQGMFANPKFVEDVAREIFAKAKERFRGRIHVRVISNESIHKHDVIAETWS</sequence>
<keyword id="KW-0378">Hydrolase</keyword>
<keyword id="KW-0408">Iron</keyword>
<keyword id="KW-0479">Metal-binding</keyword>
<keyword id="KW-1185">Reference proteome</keyword>
<protein>
    <recommendedName>
        <fullName evidence="1">GTP cyclohydrolase MptA</fullName>
        <ecNumber evidence="1">3.5.4.39</ecNumber>
    </recommendedName>
    <alternativeName>
        <fullName evidence="1">GTP cyclohydrolase IV</fullName>
    </alternativeName>
</protein>
<dbReference type="EC" id="3.5.4.39" evidence="1"/>
<dbReference type="EMBL" id="AP006878">
    <property type="protein sequence ID" value="BAD84982.1"/>
    <property type="molecule type" value="Genomic_DNA"/>
</dbReference>
<dbReference type="RefSeq" id="WP_011249744.1">
    <property type="nucleotide sequence ID" value="NC_006624.1"/>
</dbReference>
<dbReference type="SMR" id="Q5JH75"/>
<dbReference type="FunCoup" id="Q5JH75">
    <property type="interactions" value="1"/>
</dbReference>
<dbReference type="IntAct" id="Q5JH75">
    <property type="interactions" value="1"/>
</dbReference>
<dbReference type="MINT" id="Q5JH75"/>
<dbReference type="STRING" id="69014.TK0793"/>
<dbReference type="EnsemblBacteria" id="BAD84982">
    <property type="protein sequence ID" value="BAD84982"/>
    <property type="gene ID" value="TK0793"/>
</dbReference>
<dbReference type="GeneID" id="78447309"/>
<dbReference type="KEGG" id="tko:TK0793"/>
<dbReference type="PATRIC" id="fig|69014.16.peg.773"/>
<dbReference type="eggNOG" id="arCOG04301">
    <property type="taxonomic scope" value="Archaea"/>
</dbReference>
<dbReference type="HOGENOM" id="CLU_062816_1_0_2"/>
<dbReference type="InParanoid" id="Q5JH75"/>
<dbReference type="OrthoDB" id="53087at2157"/>
<dbReference type="PhylomeDB" id="Q5JH75"/>
<dbReference type="UniPathway" id="UPA00065"/>
<dbReference type="Proteomes" id="UP000000536">
    <property type="component" value="Chromosome"/>
</dbReference>
<dbReference type="GO" id="GO:0003933">
    <property type="term" value="F:GTP cyclohydrolase activity"/>
    <property type="evidence" value="ECO:0000318"/>
    <property type="project" value="GO_Central"/>
</dbReference>
<dbReference type="GO" id="GO:0003934">
    <property type="term" value="F:GTP cyclohydrolase I activity"/>
    <property type="evidence" value="ECO:0007669"/>
    <property type="project" value="InterPro"/>
</dbReference>
<dbReference type="GO" id="GO:0044682">
    <property type="term" value="F:GTP cyclohydrolase IV activity"/>
    <property type="evidence" value="ECO:0007669"/>
    <property type="project" value="UniProtKB-UniRule"/>
</dbReference>
<dbReference type="GO" id="GO:0005506">
    <property type="term" value="F:iron ion binding"/>
    <property type="evidence" value="ECO:0007669"/>
    <property type="project" value="UniProtKB-UniRule"/>
</dbReference>
<dbReference type="GO" id="GO:2001118">
    <property type="term" value="P:tetrahydromethanopterin biosynthetic process"/>
    <property type="evidence" value="ECO:0007669"/>
    <property type="project" value="UniProtKB-UniRule"/>
</dbReference>
<dbReference type="Gene3D" id="3.10.270.10">
    <property type="entry name" value="Urate Oxidase"/>
    <property type="match status" value="1"/>
</dbReference>
<dbReference type="HAMAP" id="MF_01527_A">
    <property type="entry name" value="GTP_cyclohydrol_A"/>
    <property type="match status" value="1"/>
</dbReference>
<dbReference type="InterPro" id="IPR003801">
    <property type="entry name" value="GTP_cyclohydrolase_FolE2/MptA"/>
</dbReference>
<dbReference type="InterPro" id="IPR022840">
    <property type="entry name" value="GTP_cyclohydrolase_MptA"/>
</dbReference>
<dbReference type="NCBIfam" id="NF010204">
    <property type="entry name" value="PRK13675.1-1"/>
    <property type="match status" value="1"/>
</dbReference>
<dbReference type="PANTHER" id="PTHR36445">
    <property type="entry name" value="GTP CYCLOHYDROLASE MPTA"/>
    <property type="match status" value="1"/>
</dbReference>
<dbReference type="PANTHER" id="PTHR36445:SF1">
    <property type="entry name" value="GTP CYCLOHYDROLASE MPTA"/>
    <property type="match status" value="1"/>
</dbReference>
<dbReference type="Pfam" id="PF02649">
    <property type="entry name" value="GCHY-1"/>
    <property type="match status" value="1"/>
</dbReference>
<gene>
    <name evidence="1" type="primary">mptA</name>
    <name type="ordered locus">TK0793</name>
</gene>
<comment type="function">
    <text evidence="1">Converts GTP to 7,8-dihydro-D-neopterin 2',3'-cyclic phosphate, the first intermediate in the biosynthesis of coenzyme methanopterin.</text>
</comment>
<comment type="catalytic activity">
    <reaction evidence="1">
        <text>GTP + H2O = 7,8-dihydroneopterin 2',3'-cyclic phosphate + formate + diphosphate + H(+)</text>
        <dbReference type="Rhea" id="RHEA:25860"/>
        <dbReference type="ChEBI" id="CHEBI:15377"/>
        <dbReference type="ChEBI" id="CHEBI:15378"/>
        <dbReference type="ChEBI" id="CHEBI:15740"/>
        <dbReference type="ChEBI" id="CHEBI:33019"/>
        <dbReference type="ChEBI" id="CHEBI:37565"/>
        <dbReference type="ChEBI" id="CHEBI:58854"/>
        <dbReference type="EC" id="3.5.4.39"/>
    </reaction>
</comment>
<comment type="cofactor">
    <cofactor evidence="1">
        <name>Fe(2+)</name>
        <dbReference type="ChEBI" id="CHEBI:29033"/>
    </cofactor>
    <text evidence="1">Binds 1 Fe(2+) ion per subunit.</text>
</comment>
<comment type="pathway">
    <text evidence="1">Cofactor biosynthesis; 5,6,7,8-tetrahydromethanopterin biosynthesis.</text>
</comment>
<comment type="subunit">
    <text evidence="1">Homodimer.</text>
</comment>
<comment type="similarity">
    <text evidence="1">Belongs to the GTP cyclohydrolase IV family.</text>
</comment>